<name>HPR3_THRPR</name>
<sequence length="33" mass="3809">DCLKFGWKCNPRNDKCCSGLKCGSNHNWCKLHI</sequence>
<dbReference type="PDB" id="2MXM">
    <property type="method" value="NMR"/>
    <property type="chains" value="A=1-32"/>
</dbReference>
<dbReference type="PDBsum" id="2MXM"/>
<dbReference type="BMRB" id="P0DL64"/>
<dbReference type="SMR" id="P0DL64"/>
<dbReference type="EvolutionaryTrace" id="P0DL64"/>
<dbReference type="GO" id="GO:0005576">
    <property type="term" value="C:extracellular region"/>
    <property type="evidence" value="ECO:0007669"/>
    <property type="project" value="UniProtKB-SubCell"/>
</dbReference>
<dbReference type="GO" id="GO:0008200">
    <property type="term" value="F:ion channel inhibitor activity"/>
    <property type="evidence" value="ECO:0007669"/>
    <property type="project" value="InterPro"/>
</dbReference>
<dbReference type="GO" id="GO:0017080">
    <property type="term" value="F:sodium channel regulator activity"/>
    <property type="evidence" value="ECO:0007669"/>
    <property type="project" value="UniProtKB-KW"/>
</dbReference>
<dbReference type="GO" id="GO:0090729">
    <property type="term" value="F:toxin activity"/>
    <property type="evidence" value="ECO:0007669"/>
    <property type="project" value="UniProtKB-KW"/>
</dbReference>
<dbReference type="InterPro" id="IPR011696">
    <property type="entry name" value="Huwentoxin-1"/>
</dbReference>
<dbReference type="Pfam" id="PF07740">
    <property type="entry name" value="Toxin_12"/>
    <property type="match status" value="1"/>
</dbReference>
<dbReference type="SUPFAM" id="SSF57059">
    <property type="entry name" value="omega toxin-like"/>
    <property type="match status" value="1"/>
</dbReference>
<organism>
    <name type="scientific">Thrixopelma pruriens</name>
    <name type="common">Peruvian green velvet tarantula</name>
    <dbReference type="NCBI Taxonomy" id="213387"/>
    <lineage>
        <taxon>Eukaryota</taxon>
        <taxon>Metazoa</taxon>
        <taxon>Ecdysozoa</taxon>
        <taxon>Arthropoda</taxon>
        <taxon>Chelicerata</taxon>
        <taxon>Arachnida</taxon>
        <taxon>Araneae</taxon>
        <taxon>Mygalomorphae</taxon>
        <taxon>Theraphosidae</taxon>
        <taxon>Thrixopelma</taxon>
    </lineage>
</organism>
<feature type="chain" id="PRO_0000435164" description="Mu-theraphotoxin-Tp1a" evidence="1">
    <location>
        <begin position="1"/>
        <end position="33"/>
    </location>
</feature>
<feature type="modified residue" description="Isoleucine amide" evidence="1">
    <location>
        <position position="33"/>
    </location>
</feature>
<feature type="disulfide bond" evidence="1">
    <location>
        <begin position="2"/>
        <end position="17"/>
    </location>
</feature>
<feature type="disulfide bond" evidence="1">
    <location>
        <begin position="9"/>
        <end position="22"/>
    </location>
</feature>
<feature type="disulfide bond" evidence="1">
    <location>
        <begin position="16"/>
        <end position="29"/>
    </location>
</feature>
<feature type="strand" evidence="5">
    <location>
        <begin position="20"/>
        <end position="22"/>
    </location>
</feature>
<feature type="strand" evidence="5">
    <location>
        <begin position="26"/>
        <end position="31"/>
    </location>
</feature>
<proteinExistence type="evidence at protein level"/>
<keyword id="KW-0002">3D-structure</keyword>
<keyword id="KW-0027">Amidation</keyword>
<keyword id="KW-0903">Direct protein sequencing</keyword>
<keyword id="KW-1015">Disulfide bond</keyword>
<keyword id="KW-0872">Ion channel impairing toxin</keyword>
<keyword id="KW-0960">Knottin</keyword>
<keyword id="KW-0528">Neurotoxin</keyword>
<keyword id="KW-0964">Secreted</keyword>
<keyword id="KW-0800">Toxin</keyword>
<keyword id="KW-0738">Voltage-gated sodium channel impairing toxin</keyword>
<reference key="1">
    <citation type="journal article" date="2015" name="Mol. Pharmacol.">
        <title>Identification and characterization of ProTx-III [mu-TRTX-Tp1a], a new voltage-gated sodium channel inhibitor from venom of the tarantula Thrixopelma pruriens.</title>
        <authorList>
            <person name="Cardoso F.C."/>
            <person name="Dekan Z."/>
            <person name="Rosengren K.J."/>
            <person name="Erickson A."/>
            <person name="Vetter I."/>
            <person name="Deuis J.R."/>
            <person name="Herzig V."/>
            <person name="Alewood P.F."/>
            <person name="King G.F."/>
            <person name="Lewis R.J."/>
        </authorList>
    </citation>
    <scope>PROTEIN SEQUENCE</scope>
    <scope>SYNTHESIS</scope>
    <scope>FUNCTION</scope>
    <scope>SUBCELLULAR LOCATION</scope>
    <scope>STRUCTURE BY NMR</scope>
    <scope>DISULFIDE BOND</scope>
    <scope>AMIDATION AT ILE-33</scope>
    <scope>MASS SPECTROMETRY</scope>
    <source>
        <tissue>Venom</tissue>
    </source>
</reference>
<protein>
    <recommendedName>
        <fullName evidence="2">Mu-theraphotoxin-Tp1a</fullName>
        <shortName evidence="2">Mu-TRTX-Tp1a</shortName>
    </recommendedName>
    <alternativeName>
        <fullName evidence="2">Protoxin III</fullName>
        <shortName evidence="2">ProTx-III</shortName>
    </alternativeName>
</protein>
<comment type="function">
    <text evidence="1">Inhibits voltage-gated sodium channels without significantly altering the voltage dependence of activation or inactivation. Preferentially inhibits human Nav1.7/SCN9A (IC(50)=2.1 nM) &gt; human Nav1.6/SCN8A &gt; human Nav1.2/SCN2A &gt; human Nav1.1/SCN1A &gt; human Nav1.3/SCN3A channels. Exhibits analgesic properties by reversing spontaneous pain induced in mice by intraplantar injection with OD1 (AC P84646), a scorpion toxin that potentiates human Nav1.7/SCN9A.</text>
</comment>
<comment type="subcellular location">
    <subcellularLocation>
        <location evidence="1">Secreted</location>
    </subcellularLocation>
</comment>
<comment type="tissue specificity">
    <text evidence="4">Expressed by the venom gland.</text>
</comment>
<comment type="domain">
    <text evidence="4">The presence of a 'disulfide through disulfide knot' structurally defines this protein as a knottin.</text>
</comment>
<comment type="mass spectrometry" mass="3799.0" method="MALDI" evidence="1">
    <text>Monoisotopic mass.</text>
</comment>
<comment type="miscellaneous">
    <text evidence="1">Negative results: does not affect human voltage-gated calcium channels (Cav) or nicotinic acetylcholine receptors (nAChR) at 5 uM.</text>
</comment>
<comment type="similarity">
    <text evidence="3">Belongs to the neurotoxin 10 (Hwtx-1) family. 55 (ProTx-III) subfamily.</text>
</comment>
<accession>P0DL64</accession>
<evidence type="ECO:0000269" key="1">
    <source>
    </source>
</evidence>
<evidence type="ECO:0000303" key="2">
    <source>
    </source>
</evidence>
<evidence type="ECO:0000305" key="3"/>
<evidence type="ECO:0000305" key="4">
    <source>
    </source>
</evidence>
<evidence type="ECO:0007829" key="5">
    <source>
        <dbReference type="PDB" id="2MXM"/>
    </source>
</evidence>